<name>PSD_ECOHS</name>
<sequence length="322" mass="35933">MLNSFKLSLQYILPKLWLTRLAGWGASKRAGWLTKLVIDLFVKYYKVDMKEAQKPDTASYRTFNEFFVRPLRDEVRPIDTDPNVLVMPADGVISQLGKIEENKILQAKGHNYSLEALLAGNYLMADLFRNGTFVTTYLSPRDYHRVHMPCNGILREMIYVPGDLFSVNHLTAQNVPNLFARNERVICLFDTEFGPMAQILVGATIVGSIETVWAGTITPPREGIIKRWTWPAGENDGSVALLKGQEMGRFKLGSTVINLFAPGKVNLVEQLESLSVTKIGQPLAVSTETFVTPDAEPAPLPAEEIEAEHDASPLVDDKKDQV</sequence>
<keyword id="KW-1003">Cell membrane</keyword>
<keyword id="KW-0210">Decarboxylase</keyword>
<keyword id="KW-0444">Lipid biosynthesis</keyword>
<keyword id="KW-0443">Lipid metabolism</keyword>
<keyword id="KW-0456">Lyase</keyword>
<keyword id="KW-0472">Membrane</keyword>
<keyword id="KW-0594">Phospholipid biosynthesis</keyword>
<keyword id="KW-1208">Phospholipid metabolism</keyword>
<keyword id="KW-0670">Pyruvate</keyword>
<keyword id="KW-0865">Zymogen</keyword>
<reference key="1">
    <citation type="journal article" date="2008" name="J. Bacteriol.">
        <title>The pangenome structure of Escherichia coli: comparative genomic analysis of E. coli commensal and pathogenic isolates.</title>
        <authorList>
            <person name="Rasko D.A."/>
            <person name="Rosovitz M.J."/>
            <person name="Myers G.S.A."/>
            <person name="Mongodin E.F."/>
            <person name="Fricke W.F."/>
            <person name="Gajer P."/>
            <person name="Crabtree J."/>
            <person name="Sebaihia M."/>
            <person name="Thomson N.R."/>
            <person name="Chaudhuri R."/>
            <person name="Henderson I.R."/>
            <person name="Sperandio V."/>
            <person name="Ravel J."/>
        </authorList>
    </citation>
    <scope>NUCLEOTIDE SEQUENCE [LARGE SCALE GENOMIC DNA]</scope>
    <source>
        <strain>HS</strain>
    </source>
</reference>
<gene>
    <name evidence="1" type="primary">psd</name>
    <name type="ordered locus">EcHS_A4402</name>
</gene>
<protein>
    <recommendedName>
        <fullName evidence="1">Phosphatidylserine decarboxylase proenzyme</fullName>
        <ecNumber evidence="1">4.1.1.65</ecNumber>
    </recommendedName>
    <component>
        <recommendedName>
            <fullName evidence="1">Phosphatidylserine decarboxylase alpha chain</fullName>
        </recommendedName>
    </component>
    <component>
        <recommendedName>
            <fullName evidence="1">Phosphatidylserine decarboxylase beta chain</fullName>
        </recommendedName>
    </component>
</protein>
<accession>A8A7Q7</accession>
<organism>
    <name type="scientific">Escherichia coli O9:H4 (strain HS)</name>
    <dbReference type="NCBI Taxonomy" id="331112"/>
    <lineage>
        <taxon>Bacteria</taxon>
        <taxon>Pseudomonadati</taxon>
        <taxon>Pseudomonadota</taxon>
        <taxon>Gammaproteobacteria</taxon>
        <taxon>Enterobacterales</taxon>
        <taxon>Enterobacteriaceae</taxon>
        <taxon>Escherichia</taxon>
    </lineage>
</organism>
<dbReference type="EC" id="4.1.1.65" evidence="1"/>
<dbReference type="EMBL" id="CP000802">
    <property type="protein sequence ID" value="ABV08561.1"/>
    <property type="molecule type" value="Genomic_DNA"/>
</dbReference>
<dbReference type="SMR" id="A8A7Q7"/>
<dbReference type="KEGG" id="ecx:EcHS_A4402"/>
<dbReference type="HOGENOM" id="CLU_029061_4_1_6"/>
<dbReference type="UniPathway" id="UPA00558">
    <property type="reaction ID" value="UER00616"/>
</dbReference>
<dbReference type="GO" id="GO:0005886">
    <property type="term" value="C:plasma membrane"/>
    <property type="evidence" value="ECO:0007669"/>
    <property type="project" value="UniProtKB-SubCell"/>
</dbReference>
<dbReference type="GO" id="GO:0004609">
    <property type="term" value="F:phosphatidylserine decarboxylase activity"/>
    <property type="evidence" value="ECO:0007669"/>
    <property type="project" value="UniProtKB-UniRule"/>
</dbReference>
<dbReference type="GO" id="GO:0006646">
    <property type="term" value="P:phosphatidylethanolamine biosynthetic process"/>
    <property type="evidence" value="ECO:0007669"/>
    <property type="project" value="UniProtKB-UniRule"/>
</dbReference>
<dbReference type="HAMAP" id="MF_00662">
    <property type="entry name" value="PS_decarb_PSD_B_type1"/>
    <property type="match status" value="1"/>
</dbReference>
<dbReference type="InterPro" id="IPR003817">
    <property type="entry name" value="PS_Dcarbxylase"/>
</dbReference>
<dbReference type="InterPro" id="IPR033177">
    <property type="entry name" value="PSD-B"/>
</dbReference>
<dbReference type="InterPro" id="IPR033178">
    <property type="entry name" value="PSD_type1_pro"/>
</dbReference>
<dbReference type="NCBIfam" id="TIGR00163">
    <property type="entry name" value="PS_decarb"/>
    <property type="match status" value="1"/>
</dbReference>
<dbReference type="PANTHER" id="PTHR10067">
    <property type="entry name" value="PHOSPHATIDYLSERINE DECARBOXYLASE"/>
    <property type="match status" value="1"/>
</dbReference>
<dbReference type="PANTHER" id="PTHR10067:SF6">
    <property type="entry name" value="PHOSPHATIDYLSERINE DECARBOXYLASE PROENZYME, MITOCHONDRIAL"/>
    <property type="match status" value="1"/>
</dbReference>
<dbReference type="Pfam" id="PF02666">
    <property type="entry name" value="PS_Dcarbxylase"/>
    <property type="match status" value="1"/>
</dbReference>
<evidence type="ECO:0000255" key="1">
    <source>
        <dbReference type="HAMAP-Rule" id="MF_00662"/>
    </source>
</evidence>
<evidence type="ECO:0000256" key="2">
    <source>
        <dbReference type="SAM" id="MobiDB-lite"/>
    </source>
</evidence>
<feature type="chain" id="PRO_1000061922" description="Phosphatidylserine decarboxylase beta chain" evidence="1">
    <location>
        <begin position="1"/>
        <end position="253"/>
    </location>
</feature>
<feature type="chain" id="PRO_1000061923" description="Phosphatidylserine decarboxylase alpha chain" evidence="1">
    <location>
        <begin position="254"/>
        <end position="322"/>
    </location>
</feature>
<feature type="region of interest" description="Disordered" evidence="2">
    <location>
        <begin position="293"/>
        <end position="322"/>
    </location>
</feature>
<feature type="compositionally biased region" description="Basic and acidic residues" evidence="2">
    <location>
        <begin position="308"/>
        <end position="322"/>
    </location>
</feature>
<feature type="active site" description="Charge relay system; for autoendoproteolytic cleavage activity" evidence="1">
    <location>
        <position position="90"/>
    </location>
</feature>
<feature type="active site" description="Charge relay system; for autoendoproteolytic cleavage activity" evidence="1">
    <location>
        <position position="147"/>
    </location>
</feature>
<feature type="active site" description="Charge relay system; for autoendoproteolytic cleavage activity" evidence="1">
    <location>
        <position position="254"/>
    </location>
</feature>
<feature type="active site" description="Schiff-base intermediate with substrate; via pyruvic acid; for decarboxylase activity" evidence="1">
    <location>
        <position position="254"/>
    </location>
</feature>
<feature type="site" description="Cleavage (non-hydrolytic); by autocatalysis" evidence="1">
    <location>
        <begin position="253"/>
        <end position="254"/>
    </location>
</feature>
<feature type="modified residue" description="Pyruvic acid (Ser); by autocatalysis" evidence="1">
    <location>
        <position position="254"/>
    </location>
</feature>
<proteinExistence type="inferred from homology"/>
<comment type="function">
    <text evidence="1">Catalyzes the formation of phosphatidylethanolamine (PtdEtn) from phosphatidylserine (PtdSer).</text>
</comment>
<comment type="catalytic activity">
    <reaction evidence="1">
        <text>a 1,2-diacyl-sn-glycero-3-phospho-L-serine + H(+) = a 1,2-diacyl-sn-glycero-3-phosphoethanolamine + CO2</text>
        <dbReference type="Rhea" id="RHEA:20828"/>
        <dbReference type="ChEBI" id="CHEBI:15378"/>
        <dbReference type="ChEBI" id="CHEBI:16526"/>
        <dbReference type="ChEBI" id="CHEBI:57262"/>
        <dbReference type="ChEBI" id="CHEBI:64612"/>
        <dbReference type="EC" id="4.1.1.65"/>
    </reaction>
</comment>
<comment type="cofactor">
    <cofactor evidence="1">
        <name>pyruvate</name>
        <dbReference type="ChEBI" id="CHEBI:15361"/>
    </cofactor>
    <text evidence="1">Binds 1 pyruvoyl group covalently per subunit.</text>
</comment>
<comment type="pathway">
    <text evidence="1">Phospholipid metabolism; phosphatidylethanolamine biosynthesis; phosphatidylethanolamine from CDP-diacylglycerol: step 2/2.</text>
</comment>
<comment type="subunit">
    <text evidence="1">Heterodimer of a large membrane-associated beta subunit and a small pyruvoyl-containing alpha subunit.</text>
</comment>
<comment type="subcellular location">
    <subcellularLocation>
        <location evidence="1">Cell membrane</location>
        <topology evidence="1">Peripheral membrane protein</topology>
    </subcellularLocation>
</comment>
<comment type="PTM">
    <text evidence="1">Is synthesized initially as an inactive proenzyme. Formation of the active enzyme involves a self-maturation process in which the active site pyruvoyl group is generated from an internal serine residue via an autocatalytic post-translational modification. Two non-identical subunits are generated from the proenzyme in this reaction, and the pyruvate is formed at the N-terminus of the alpha chain, which is derived from the carboxyl end of the proenzyme. The autoendoproteolytic cleavage occurs by a canonical serine protease mechanism, in which the side chain hydroxyl group of the serine supplies its oxygen atom to form the C-terminus of the beta chain, while the remainder of the serine residue undergoes an oxidative deamination to produce ammonia and the pyruvoyl prosthetic group on the alpha chain. During this reaction, the Ser that is part of the protease active site of the proenzyme becomes the pyruvoyl prosthetic group, which constitutes an essential element of the active site of the mature decarboxylase.</text>
</comment>
<comment type="similarity">
    <text evidence="1">Belongs to the phosphatidylserine decarboxylase family. PSD-B subfamily. Prokaryotic type I sub-subfamily.</text>
</comment>